<sequence length="233" mass="24756">MLIVLSLGGSILAKNLDPDRFLKYADVLRKLSKKHTLLVVAGGGEAARNYIDTARAVGADEVTCDYIGIEITRLNAHLLAAALGPDACPEIPTNYLEASKAIRPGKVVVMGGVTPGQTTDAVAAILAEFLRADLLAIATSIDGVYSSDPNCDPSAVKYDKISPEKLINIVMAIEMKAGSKSPVDPVAAKIIERCKLDALVMDARDPVQLEEVLDREAAKKSPISCGTWITTKI</sequence>
<keyword id="KW-0067">ATP-binding</keyword>
<keyword id="KW-0963">Cytoplasm</keyword>
<keyword id="KW-0418">Kinase</keyword>
<keyword id="KW-0547">Nucleotide-binding</keyword>
<keyword id="KW-0665">Pyrimidine biosynthesis</keyword>
<keyword id="KW-0808">Transferase</keyword>
<feature type="chain" id="PRO_1000053950" description="Uridylate kinase">
    <location>
        <begin position="1"/>
        <end position="233"/>
    </location>
</feature>
<feature type="binding site" evidence="1">
    <location>
        <begin position="9"/>
        <end position="10"/>
    </location>
    <ligand>
        <name>ATP</name>
        <dbReference type="ChEBI" id="CHEBI:30616"/>
    </ligand>
</feature>
<feature type="binding site" evidence="1">
    <location>
        <position position="43"/>
    </location>
    <ligand>
        <name>UMP</name>
        <dbReference type="ChEBI" id="CHEBI:57865"/>
    </ligand>
</feature>
<feature type="binding site" evidence="1">
    <location>
        <position position="44"/>
    </location>
    <ligand>
        <name>ATP</name>
        <dbReference type="ChEBI" id="CHEBI:30616"/>
    </ligand>
</feature>
<feature type="binding site" evidence="1">
    <location>
        <position position="48"/>
    </location>
    <ligand>
        <name>ATP</name>
        <dbReference type="ChEBI" id="CHEBI:30616"/>
    </ligand>
</feature>
<feature type="binding site" evidence="1">
    <location>
        <position position="65"/>
    </location>
    <ligand>
        <name>UMP</name>
        <dbReference type="ChEBI" id="CHEBI:57865"/>
    </ligand>
</feature>
<feature type="binding site" evidence="1">
    <location>
        <begin position="113"/>
        <end position="119"/>
    </location>
    <ligand>
        <name>UMP</name>
        <dbReference type="ChEBI" id="CHEBI:57865"/>
    </ligand>
</feature>
<feature type="binding site" evidence="1">
    <location>
        <position position="139"/>
    </location>
    <ligand>
        <name>ATP</name>
        <dbReference type="ChEBI" id="CHEBI:30616"/>
    </ligand>
</feature>
<feature type="binding site" evidence="1">
    <location>
        <position position="145"/>
    </location>
    <ligand>
        <name>ATP</name>
        <dbReference type="ChEBI" id="CHEBI:30616"/>
    </ligand>
</feature>
<feature type="binding site" evidence="1">
    <location>
        <position position="148"/>
    </location>
    <ligand>
        <name>ATP</name>
        <dbReference type="ChEBI" id="CHEBI:30616"/>
    </ligand>
</feature>
<accession>Q46EC7</accession>
<name>PYRH_METBF</name>
<evidence type="ECO:0000255" key="1">
    <source>
        <dbReference type="HAMAP-Rule" id="MF_01220"/>
    </source>
</evidence>
<proteinExistence type="inferred from homology"/>
<comment type="function">
    <text evidence="1">Catalyzes the reversible phosphorylation of UMP to UDP.</text>
</comment>
<comment type="catalytic activity">
    <reaction evidence="1">
        <text>UMP + ATP = UDP + ADP</text>
        <dbReference type="Rhea" id="RHEA:24400"/>
        <dbReference type="ChEBI" id="CHEBI:30616"/>
        <dbReference type="ChEBI" id="CHEBI:57865"/>
        <dbReference type="ChEBI" id="CHEBI:58223"/>
        <dbReference type="ChEBI" id="CHEBI:456216"/>
        <dbReference type="EC" id="2.7.4.22"/>
    </reaction>
</comment>
<comment type="activity regulation">
    <text evidence="1">Inhibited by UTP.</text>
</comment>
<comment type="pathway">
    <text evidence="1">Pyrimidine metabolism; CTP biosynthesis via de novo pathway; UDP from UMP (UMPK route): step 1/1.</text>
</comment>
<comment type="subunit">
    <text evidence="1">Homohexamer.</text>
</comment>
<comment type="subcellular location">
    <subcellularLocation>
        <location evidence="1">Cytoplasm</location>
    </subcellularLocation>
</comment>
<comment type="similarity">
    <text evidence="1">Belongs to the UMP kinase family.</text>
</comment>
<protein>
    <recommendedName>
        <fullName evidence="1">Uridylate kinase</fullName>
        <shortName evidence="1">UK</shortName>
        <ecNumber evidence="1">2.7.4.22</ecNumber>
    </recommendedName>
    <alternativeName>
        <fullName evidence="1">Uridine monophosphate kinase</fullName>
        <shortName evidence="1">UMP kinase</shortName>
        <shortName evidence="1">UMPK</shortName>
    </alternativeName>
</protein>
<gene>
    <name evidence="1" type="primary">pyrH</name>
    <name type="ordered locus">Mbar_A0788</name>
</gene>
<reference key="1">
    <citation type="journal article" date="2006" name="J. Bacteriol.">
        <title>The Methanosarcina barkeri genome: comparative analysis with Methanosarcina acetivorans and Methanosarcina mazei reveals extensive rearrangement within methanosarcinal genomes.</title>
        <authorList>
            <person name="Maeder D.L."/>
            <person name="Anderson I."/>
            <person name="Brettin T.S."/>
            <person name="Bruce D.C."/>
            <person name="Gilna P."/>
            <person name="Han C.S."/>
            <person name="Lapidus A."/>
            <person name="Metcalf W.W."/>
            <person name="Saunders E."/>
            <person name="Tapia R."/>
            <person name="Sowers K.R."/>
        </authorList>
    </citation>
    <scope>NUCLEOTIDE SEQUENCE [LARGE SCALE GENOMIC DNA]</scope>
    <source>
        <strain>Fusaro / DSM 804</strain>
    </source>
</reference>
<dbReference type="EC" id="2.7.4.22" evidence="1"/>
<dbReference type="EMBL" id="CP000099">
    <property type="protein sequence ID" value="AAZ69765.1"/>
    <property type="molecule type" value="Genomic_DNA"/>
</dbReference>
<dbReference type="SMR" id="Q46EC7"/>
<dbReference type="STRING" id="269797.Mbar_A0788"/>
<dbReference type="PaxDb" id="269797-Mbar_A0788"/>
<dbReference type="KEGG" id="mba:Mbar_A0788"/>
<dbReference type="eggNOG" id="arCOG00858">
    <property type="taxonomic scope" value="Archaea"/>
</dbReference>
<dbReference type="HOGENOM" id="CLU_079546_0_0_2"/>
<dbReference type="OrthoDB" id="372251at2157"/>
<dbReference type="UniPathway" id="UPA00159">
    <property type="reaction ID" value="UER00275"/>
</dbReference>
<dbReference type="GO" id="GO:0005737">
    <property type="term" value="C:cytoplasm"/>
    <property type="evidence" value="ECO:0007669"/>
    <property type="project" value="UniProtKB-SubCell"/>
</dbReference>
<dbReference type="GO" id="GO:0005524">
    <property type="term" value="F:ATP binding"/>
    <property type="evidence" value="ECO:0007669"/>
    <property type="project" value="UniProtKB-KW"/>
</dbReference>
<dbReference type="GO" id="GO:0033862">
    <property type="term" value="F:UMP kinase activity"/>
    <property type="evidence" value="ECO:0007669"/>
    <property type="project" value="UniProtKB-EC"/>
</dbReference>
<dbReference type="GO" id="GO:0044210">
    <property type="term" value="P:'de novo' CTP biosynthetic process"/>
    <property type="evidence" value="ECO:0007669"/>
    <property type="project" value="UniProtKB-UniRule"/>
</dbReference>
<dbReference type="GO" id="GO:0006225">
    <property type="term" value="P:UDP biosynthetic process"/>
    <property type="evidence" value="ECO:0007669"/>
    <property type="project" value="TreeGrafter"/>
</dbReference>
<dbReference type="CDD" id="cd04253">
    <property type="entry name" value="AAK_UMPK-PyrH-Pf"/>
    <property type="match status" value="1"/>
</dbReference>
<dbReference type="FunFam" id="3.40.1160.10:FF:000030">
    <property type="entry name" value="Uridylate kinase"/>
    <property type="match status" value="1"/>
</dbReference>
<dbReference type="Gene3D" id="3.40.1160.10">
    <property type="entry name" value="Acetylglutamate kinase-like"/>
    <property type="match status" value="1"/>
</dbReference>
<dbReference type="HAMAP" id="MF_01220_A">
    <property type="entry name" value="PyrH_A"/>
    <property type="match status" value="1"/>
</dbReference>
<dbReference type="InterPro" id="IPR036393">
    <property type="entry name" value="AceGlu_kinase-like_sf"/>
</dbReference>
<dbReference type="InterPro" id="IPR001048">
    <property type="entry name" value="Asp/Glu/Uridylate_kinase"/>
</dbReference>
<dbReference type="InterPro" id="IPR011817">
    <property type="entry name" value="Uridylate_kinase"/>
</dbReference>
<dbReference type="InterPro" id="IPR011818">
    <property type="entry name" value="Uridylate_kinase_arch/spir"/>
</dbReference>
<dbReference type="NCBIfam" id="TIGR02076">
    <property type="entry name" value="pyrH_arch"/>
    <property type="match status" value="1"/>
</dbReference>
<dbReference type="PANTHER" id="PTHR42833">
    <property type="entry name" value="URIDYLATE KINASE"/>
    <property type="match status" value="1"/>
</dbReference>
<dbReference type="PANTHER" id="PTHR42833:SF4">
    <property type="entry name" value="URIDYLATE KINASE PUMPKIN, CHLOROPLASTIC"/>
    <property type="match status" value="1"/>
</dbReference>
<dbReference type="Pfam" id="PF00696">
    <property type="entry name" value="AA_kinase"/>
    <property type="match status" value="1"/>
</dbReference>
<dbReference type="PIRSF" id="PIRSF005650">
    <property type="entry name" value="Uridylate_kin"/>
    <property type="match status" value="1"/>
</dbReference>
<dbReference type="SUPFAM" id="SSF53633">
    <property type="entry name" value="Carbamate kinase-like"/>
    <property type="match status" value="1"/>
</dbReference>
<organism>
    <name type="scientific">Methanosarcina barkeri (strain Fusaro / DSM 804)</name>
    <dbReference type="NCBI Taxonomy" id="269797"/>
    <lineage>
        <taxon>Archaea</taxon>
        <taxon>Methanobacteriati</taxon>
        <taxon>Methanobacteriota</taxon>
        <taxon>Stenosarchaea group</taxon>
        <taxon>Methanomicrobia</taxon>
        <taxon>Methanosarcinales</taxon>
        <taxon>Methanosarcinaceae</taxon>
        <taxon>Methanosarcina</taxon>
    </lineage>
</organism>